<keyword id="KW-1185">Reference proteome</keyword>
<keyword id="KW-0687">Ribonucleoprotein</keyword>
<keyword id="KW-0689">Ribosomal protein</keyword>
<gene>
    <name evidence="1" type="primary">rpmC</name>
    <name type="ordered locus">Swit_1345</name>
</gene>
<sequence>MAKIADLTAKTDDQLAQDLGELKREQFNLRFQAATSQLEKPSRVKEVRRTIAQIKTLQTQRAAAAAK</sequence>
<feature type="chain" id="PRO_1000007615" description="Large ribosomal subunit protein uL29">
    <location>
        <begin position="1"/>
        <end position="67"/>
    </location>
</feature>
<accession>A5V5Z4</accession>
<evidence type="ECO:0000255" key="1">
    <source>
        <dbReference type="HAMAP-Rule" id="MF_00374"/>
    </source>
</evidence>
<evidence type="ECO:0000305" key="2"/>
<protein>
    <recommendedName>
        <fullName evidence="1">Large ribosomal subunit protein uL29</fullName>
    </recommendedName>
    <alternativeName>
        <fullName evidence="2">50S ribosomal protein L29</fullName>
    </alternativeName>
</protein>
<dbReference type="EMBL" id="CP000699">
    <property type="protein sequence ID" value="ABQ67710.1"/>
    <property type="molecule type" value="Genomic_DNA"/>
</dbReference>
<dbReference type="SMR" id="A5V5Z4"/>
<dbReference type="STRING" id="392499.Swit_1345"/>
<dbReference type="PaxDb" id="392499-Swit_1345"/>
<dbReference type="KEGG" id="swi:Swit_1345"/>
<dbReference type="eggNOG" id="COG0255">
    <property type="taxonomic scope" value="Bacteria"/>
</dbReference>
<dbReference type="HOGENOM" id="CLU_158491_1_0_5"/>
<dbReference type="OrthoDB" id="9815192at2"/>
<dbReference type="Proteomes" id="UP000001989">
    <property type="component" value="Chromosome"/>
</dbReference>
<dbReference type="GO" id="GO:0022625">
    <property type="term" value="C:cytosolic large ribosomal subunit"/>
    <property type="evidence" value="ECO:0007669"/>
    <property type="project" value="TreeGrafter"/>
</dbReference>
<dbReference type="GO" id="GO:0003735">
    <property type="term" value="F:structural constituent of ribosome"/>
    <property type="evidence" value="ECO:0007669"/>
    <property type="project" value="InterPro"/>
</dbReference>
<dbReference type="GO" id="GO:0006412">
    <property type="term" value="P:translation"/>
    <property type="evidence" value="ECO:0007669"/>
    <property type="project" value="UniProtKB-UniRule"/>
</dbReference>
<dbReference type="CDD" id="cd00427">
    <property type="entry name" value="Ribosomal_L29_HIP"/>
    <property type="match status" value="1"/>
</dbReference>
<dbReference type="FunFam" id="1.10.287.310:FF:000001">
    <property type="entry name" value="50S ribosomal protein L29"/>
    <property type="match status" value="1"/>
</dbReference>
<dbReference type="Gene3D" id="1.10.287.310">
    <property type="match status" value="1"/>
</dbReference>
<dbReference type="HAMAP" id="MF_00374">
    <property type="entry name" value="Ribosomal_uL29"/>
    <property type="match status" value="1"/>
</dbReference>
<dbReference type="InterPro" id="IPR050063">
    <property type="entry name" value="Ribosomal_protein_uL29"/>
</dbReference>
<dbReference type="InterPro" id="IPR001854">
    <property type="entry name" value="Ribosomal_uL29"/>
</dbReference>
<dbReference type="InterPro" id="IPR018254">
    <property type="entry name" value="Ribosomal_uL29_CS"/>
</dbReference>
<dbReference type="InterPro" id="IPR036049">
    <property type="entry name" value="Ribosomal_uL29_sf"/>
</dbReference>
<dbReference type="NCBIfam" id="TIGR00012">
    <property type="entry name" value="L29"/>
    <property type="match status" value="1"/>
</dbReference>
<dbReference type="PANTHER" id="PTHR10916">
    <property type="entry name" value="60S RIBOSOMAL PROTEIN L35/50S RIBOSOMAL PROTEIN L29"/>
    <property type="match status" value="1"/>
</dbReference>
<dbReference type="PANTHER" id="PTHR10916:SF0">
    <property type="entry name" value="LARGE RIBOSOMAL SUBUNIT PROTEIN UL29C"/>
    <property type="match status" value="1"/>
</dbReference>
<dbReference type="Pfam" id="PF00831">
    <property type="entry name" value="Ribosomal_L29"/>
    <property type="match status" value="1"/>
</dbReference>
<dbReference type="SUPFAM" id="SSF46561">
    <property type="entry name" value="Ribosomal protein L29 (L29p)"/>
    <property type="match status" value="1"/>
</dbReference>
<dbReference type="PROSITE" id="PS00579">
    <property type="entry name" value="RIBOSOMAL_L29"/>
    <property type="match status" value="1"/>
</dbReference>
<name>RL29_RHIWR</name>
<organism>
    <name type="scientific">Rhizorhabdus wittichii (strain DSM 6014 / CCUG 31198 / JCM 15750 / NBRC 105917 / EY 4224 / RW1)</name>
    <name type="common">Sphingomonas wittichii</name>
    <dbReference type="NCBI Taxonomy" id="392499"/>
    <lineage>
        <taxon>Bacteria</taxon>
        <taxon>Pseudomonadati</taxon>
        <taxon>Pseudomonadota</taxon>
        <taxon>Alphaproteobacteria</taxon>
        <taxon>Sphingomonadales</taxon>
        <taxon>Sphingomonadaceae</taxon>
        <taxon>Rhizorhabdus</taxon>
    </lineage>
</organism>
<proteinExistence type="inferred from homology"/>
<reference key="1">
    <citation type="journal article" date="2010" name="J. Bacteriol.">
        <title>Genome sequence of the dioxin-mineralizing bacterium Sphingomonas wittichii RW1.</title>
        <authorList>
            <person name="Miller T.R."/>
            <person name="Delcher A.L."/>
            <person name="Salzberg S.L."/>
            <person name="Saunders E."/>
            <person name="Detter J.C."/>
            <person name="Halden R.U."/>
        </authorList>
    </citation>
    <scope>NUCLEOTIDE SEQUENCE [LARGE SCALE GENOMIC DNA]</scope>
    <source>
        <strain>DSM 6014 / CCUG 31198 / JCM 15750 / NBRC 105917 / EY 4224 / RW1</strain>
    </source>
</reference>
<comment type="similarity">
    <text evidence="1">Belongs to the universal ribosomal protein uL29 family.</text>
</comment>